<evidence type="ECO:0000255" key="1">
    <source>
        <dbReference type="HAMAP-Rule" id="MF_01563"/>
    </source>
</evidence>
<dbReference type="EMBL" id="AE006468">
    <property type="protein sequence ID" value="AAL23201.1"/>
    <property type="molecule type" value="Genomic_DNA"/>
</dbReference>
<dbReference type="RefSeq" id="WP_000133618.1">
    <property type="nucleotide sequence ID" value="NC_003197.2"/>
</dbReference>
<dbReference type="SMR" id="Q7CP93"/>
<dbReference type="STRING" id="99287.STM4381"/>
<dbReference type="PaxDb" id="99287-STM4381"/>
<dbReference type="KEGG" id="stm:STM4381"/>
<dbReference type="PATRIC" id="fig|99287.12.peg.4606"/>
<dbReference type="HOGENOM" id="CLU_060699_3_2_6"/>
<dbReference type="OMA" id="FDNDVTR"/>
<dbReference type="PhylomeDB" id="Q7CP93"/>
<dbReference type="BioCyc" id="SENT99287:STM4381-MONOMER"/>
<dbReference type="Proteomes" id="UP000001014">
    <property type="component" value="Chromosome"/>
</dbReference>
<dbReference type="GO" id="GO:0005737">
    <property type="term" value="C:cytoplasm"/>
    <property type="evidence" value="ECO:0007669"/>
    <property type="project" value="UniProtKB-SubCell"/>
</dbReference>
<dbReference type="GO" id="GO:0000987">
    <property type="term" value="F:cis-regulatory region sequence-specific DNA binding"/>
    <property type="evidence" value="ECO:0000318"/>
    <property type="project" value="GO_Central"/>
</dbReference>
<dbReference type="GO" id="GO:0098531">
    <property type="term" value="F:ligand-modulated transcription factor activity"/>
    <property type="evidence" value="ECO:0000318"/>
    <property type="project" value="GO_Central"/>
</dbReference>
<dbReference type="GO" id="GO:0045892">
    <property type="term" value="P:negative regulation of DNA-templated transcription"/>
    <property type="evidence" value="ECO:0007669"/>
    <property type="project" value="UniProtKB-UniRule"/>
</dbReference>
<dbReference type="GO" id="GO:0006355">
    <property type="term" value="P:regulation of DNA-templated transcription"/>
    <property type="evidence" value="ECO:0000318"/>
    <property type="project" value="GO_Central"/>
</dbReference>
<dbReference type="FunFam" id="1.10.10.10:FF:000160">
    <property type="entry name" value="HTH-type transcriptional regulator UlaR"/>
    <property type="match status" value="1"/>
</dbReference>
<dbReference type="Gene3D" id="1.10.10.10">
    <property type="entry name" value="Winged helix-like DNA-binding domain superfamily/Winged helix DNA-binding domain"/>
    <property type="match status" value="1"/>
</dbReference>
<dbReference type="HAMAP" id="MF_01563">
    <property type="entry name" value="HTH_type_UlaR"/>
    <property type="match status" value="1"/>
</dbReference>
<dbReference type="InterPro" id="IPR050313">
    <property type="entry name" value="Carb_Metab_HTH_regulators"/>
</dbReference>
<dbReference type="InterPro" id="IPR014036">
    <property type="entry name" value="DeoR-like_C"/>
</dbReference>
<dbReference type="InterPro" id="IPR001034">
    <property type="entry name" value="DeoR_HTH"/>
</dbReference>
<dbReference type="InterPro" id="IPR037171">
    <property type="entry name" value="NagB/RpiA_transferase-like"/>
</dbReference>
<dbReference type="InterPro" id="IPR018356">
    <property type="entry name" value="Tscrpt_reg_HTH_DeoR_CS"/>
</dbReference>
<dbReference type="InterPro" id="IPR023711">
    <property type="entry name" value="Tscrpt_reg_HTH_UlaR"/>
</dbReference>
<dbReference type="InterPro" id="IPR036388">
    <property type="entry name" value="WH-like_DNA-bd_sf"/>
</dbReference>
<dbReference type="InterPro" id="IPR036390">
    <property type="entry name" value="WH_DNA-bd_sf"/>
</dbReference>
<dbReference type="NCBIfam" id="NF010034">
    <property type="entry name" value="PRK13509.1"/>
    <property type="match status" value="1"/>
</dbReference>
<dbReference type="PANTHER" id="PTHR30363">
    <property type="entry name" value="HTH-TYPE TRANSCRIPTIONAL REGULATOR SRLR-RELATED"/>
    <property type="match status" value="1"/>
</dbReference>
<dbReference type="PANTHER" id="PTHR30363:SF55">
    <property type="entry name" value="HTH-TYPE TRANSCRIPTIONAL REGULATOR ULAR"/>
    <property type="match status" value="1"/>
</dbReference>
<dbReference type="Pfam" id="PF00455">
    <property type="entry name" value="DeoRC"/>
    <property type="match status" value="1"/>
</dbReference>
<dbReference type="Pfam" id="PF08220">
    <property type="entry name" value="HTH_DeoR"/>
    <property type="match status" value="1"/>
</dbReference>
<dbReference type="PRINTS" id="PR00037">
    <property type="entry name" value="HTHLACR"/>
</dbReference>
<dbReference type="SMART" id="SM01134">
    <property type="entry name" value="DeoRC"/>
    <property type="match status" value="1"/>
</dbReference>
<dbReference type="SMART" id="SM00420">
    <property type="entry name" value="HTH_DEOR"/>
    <property type="match status" value="1"/>
</dbReference>
<dbReference type="SUPFAM" id="SSF100950">
    <property type="entry name" value="NagB/RpiA/CoA transferase-like"/>
    <property type="match status" value="1"/>
</dbReference>
<dbReference type="SUPFAM" id="SSF46785">
    <property type="entry name" value="Winged helix' DNA-binding domain"/>
    <property type="match status" value="1"/>
</dbReference>
<dbReference type="PROSITE" id="PS00894">
    <property type="entry name" value="HTH_DEOR_1"/>
    <property type="match status" value="1"/>
</dbReference>
<dbReference type="PROSITE" id="PS51000">
    <property type="entry name" value="HTH_DEOR_2"/>
    <property type="match status" value="1"/>
</dbReference>
<reference key="1">
    <citation type="journal article" date="2001" name="Nature">
        <title>Complete genome sequence of Salmonella enterica serovar Typhimurium LT2.</title>
        <authorList>
            <person name="McClelland M."/>
            <person name="Sanderson K.E."/>
            <person name="Spieth J."/>
            <person name="Clifton S.W."/>
            <person name="Latreille P."/>
            <person name="Courtney L."/>
            <person name="Porwollik S."/>
            <person name="Ali J."/>
            <person name="Dante M."/>
            <person name="Du F."/>
            <person name="Hou S."/>
            <person name="Layman D."/>
            <person name="Leonard S."/>
            <person name="Nguyen C."/>
            <person name="Scott K."/>
            <person name="Holmes A."/>
            <person name="Grewal N."/>
            <person name="Mulvaney E."/>
            <person name="Ryan E."/>
            <person name="Sun H."/>
            <person name="Florea L."/>
            <person name="Miller W."/>
            <person name="Stoneking T."/>
            <person name="Nhan M."/>
            <person name="Waterston R."/>
            <person name="Wilson R.K."/>
        </authorList>
    </citation>
    <scope>NUCLEOTIDE SEQUENCE [LARGE SCALE GENOMIC DNA]</scope>
    <source>
        <strain>LT2 / SGSC1412 / ATCC 700720</strain>
    </source>
</reference>
<proteinExistence type="inferred from homology"/>
<sequence length="251" mass="27487">MTEAQRHQILLDMLAQLGFVTVENVIERLGISPATARRDINKLDESGKLKKVRNGAEAITQQRPRWTPMNLHQAQNHDEKVRIAKAASQLVNPGESVVINCGSTAFLLGREMCGKPVQIITNYLPLANYLIDQEHDSVIIMGGQYNKSQSITLSPQGSENSLYAGHWMFTSGKGLTADGLYKTDMLTAMAEQKMLSVVGKLVALVDSSKIGERAGMLFSRADQIAMLITGKNANPQVLQQLEAQGVSILRV</sequence>
<comment type="function">
    <text evidence="1">Represses ulaG and the ulaABCDEF operon.</text>
</comment>
<comment type="subcellular location">
    <subcellularLocation>
        <location evidence="1">Cytoplasm</location>
    </subcellularLocation>
</comment>
<feature type="chain" id="PRO_0000234025" description="HTH-type transcriptional regulator UlaR">
    <location>
        <begin position="1"/>
        <end position="251"/>
    </location>
</feature>
<feature type="domain" description="HTH deoR-type" evidence="1">
    <location>
        <begin position="3"/>
        <end position="58"/>
    </location>
</feature>
<feature type="DNA-binding region" description="H-T-H motif" evidence="1">
    <location>
        <begin position="20"/>
        <end position="39"/>
    </location>
</feature>
<keyword id="KW-0963">Cytoplasm</keyword>
<keyword id="KW-0238">DNA-binding</keyword>
<keyword id="KW-1185">Reference proteome</keyword>
<keyword id="KW-0678">Repressor</keyword>
<keyword id="KW-0804">Transcription</keyword>
<keyword id="KW-0805">Transcription regulation</keyword>
<name>ULAR_SALTY</name>
<protein>
    <recommendedName>
        <fullName evidence="1">HTH-type transcriptional regulator UlaR</fullName>
    </recommendedName>
</protein>
<organism>
    <name type="scientific">Salmonella typhimurium (strain LT2 / SGSC1412 / ATCC 700720)</name>
    <dbReference type="NCBI Taxonomy" id="99287"/>
    <lineage>
        <taxon>Bacteria</taxon>
        <taxon>Pseudomonadati</taxon>
        <taxon>Pseudomonadota</taxon>
        <taxon>Gammaproteobacteria</taxon>
        <taxon>Enterobacterales</taxon>
        <taxon>Enterobacteriaceae</taxon>
        <taxon>Salmonella</taxon>
    </lineage>
</organism>
<gene>
    <name evidence="1" type="primary">ulaR</name>
    <name type="ordered locus">STM4381</name>
</gene>
<accession>Q7CP93</accession>